<reference key="1">
    <citation type="journal article" date="2015" name="Genome Announc.">
        <title>Genome sequence of Aspergillus flavus NRRL 3357, a strain that causes aflatoxin contamination of food and feed.</title>
        <authorList>
            <person name="Nierman W.C."/>
            <person name="Yu J."/>
            <person name="Fedorova-Abrams N.D."/>
            <person name="Losada L."/>
            <person name="Cleveland T.E."/>
            <person name="Bhatnagar D."/>
            <person name="Bennett J.W."/>
            <person name="Dean R."/>
            <person name="Payne G.A."/>
        </authorList>
    </citation>
    <scope>NUCLEOTIDE SEQUENCE [LARGE SCALE GENOMIC DNA]</scope>
    <source>
        <strain>ATCC 200026 / FGSC A1120 / IAM 13836 / NRRL 3357 / JCM 12722 / SRRC 167</strain>
    </source>
</reference>
<reference key="2">
    <citation type="journal article" date="2013" name="Mol. Plant Pathol.">
        <title>Localization, morphology and transcriptional profile of Aspergillus flavus during seed colonization.</title>
        <authorList>
            <person name="Dolezal A.L."/>
            <person name="Obrian G.R."/>
            <person name="Nielsen D.M."/>
            <person name="Woloshuk C.P."/>
            <person name="Boston R.S."/>
            <person name="Payne G.A."/>
        </authorList>
    </citation>
    <scope>IDENTIFICATION WITHIN THE CLUSTER</scope>
    <scope>INDUCTION</scope>
</reference>
<reference key="3">
    <citation type="journal article" date="2018" name="Fungal Genet. Biol.">
        <title>Identification and functional analysis of the aspergillic acid gene cluster in Aspergillus flavus.</title>
        <authorList>
            <person name="Lebar M.D."/>
            <person name="Cary J.W."/>
            <person name="Majumdar R."/>
            <person name="Carter-Wientjes C.H."/>
            <person name="Mack B.M."/>
            <person name="Wei Q."/>
            <person name="Uka V."/>
            <person name="De Saeger S."/>
            <person name="Diana Di Mavungu J."/>
        </authorList>
    </citation>
    <scope>FUNCTION</scope>
    <scope>DISRUPTION PHENOTYPE</scope>
    <scope>PATHWAY</scope>
</reference>
<sequence length="227" mass="26072">MRFRQQVETCLNYWPAEGPVQRELILGTVGAYRRPIDSRPVLIQDVRGQEGTFTLDIHGFQFIKHISQHVASFDEASVLKDNMTALEAEHLLKTRWAIVNIWRPLKPVPRDPLAVSDARSFHDKDLLEIYGRVPGRQAKKDYDAATKGSGFGMLYGKYSPGQQWFYMSDMKPDEALLIKCYDSKDDGRTARRTPHTAFVDPRTRDVKVARESLELRCLVFFEDQPLA</sequence>
<comment type="function">
    <text evidence="2">Hydroxylase/desaturase; part of the gene cluster that mediates the biosynthesis of aspergillic acid, a hydroxamic acid-containing pyrazinone with aliphatic side chains that originates from leucine (Leu) and isoleucine (Ile) (PubMed:29674152). Aspergillic acid has antibiotic properties and was shown to be lethal to mice (PubMed:29674152). The first step in the pathway is the production of deoxyaspergillic acid via a condensation between the Ile amine and the Leu carboxylic acid, followed by a reductive release from the protein forming the dipeptide aldehyde NH(2)-Leu-Ile-CHO, which could undergo an intermolecular cyclization resulting in a dihydropyrazinone (PubMed:29674152). As the NRPS asaC lacks a condensation domain, it is improbable that it is responsible for condensation of Leu and Ile (PubMed:29674152). One possibility is that asaC acts on a previously condensed dipeptide and functions as a Leu-Ile reductase to yield deoxyaspergillic acid (PubMed:29674152). After asaC forms deoxyaspergillic acid, the cytochrome P450 asaD oxidizes the pyrazinone to the hydroxamic acid-containing bioactive metabolite aspergillic acid (PubMed:29674152). The hydroxylase/desaturase asaB can then convert aspergillic acid to hydroxyaspergillic acid (PubMed:29674152). Both aspergillic acid and hydroxyaspergillic acid can form complexes with iron producing ferriaspergillin analogs (PubMed:29674152).</text>
</comment>
<comment type="pathway">
    <text evidence="2">Secondary metabolite biosynthesis.</text>
</comment>
<comment type="induction">
    <text evidence="1">Expressed during the earliest stages of maize kernel infection (PubMed:23834374).</text>
</comment>
<comment type="disruption phenotype">
    <text evidence="2">Abolishes the production of hydroxyaspergillic acid and leads to a reduction of ferriaspergillin analog containing hydroxyaspergillic acid (PubMed:29674152).</text>
</comment>
<comment type="similarity">
    <text evidence="4">Belongs to the asaB hydroxylase/desaturase family.</text>
</comment>
<accession>B8N0E7</accession>
<evidence type="ECO:0000269" key="1">
    <source>
    </source>
</evidence>
<evidence type="ECO:0000269" key="2">
    <source>
    </source>
</evidence>
<evidence type="ECO:0000303" key="3">
    <source>
    </source>
</evidence>
<evidence type="ECO:0000305" key="4"/>
<organism>
    <name type="scientific">Aspergillus flavus (strain ATCC 200026 / FGSC A1120 / IAM 13836 / NRRL 3357 / JCM 12722 / SRRC 167)</name>
    <dbReference type="NCBI Taxonomy" id="332952"/>
    <lineage>
        <taxon>Eukaryota</taxon>
        <taxon>Fungi</taxon>
        <taxon>Dikarya</taxon>
        <taxon>Ascomycota</taxon>
        <taxon>Pezizomycotina</taxon>
        <taxon>Eurotiomycetes</taxon>
        <taxon>Eurotiomycetidae</taxon>
        <taxon>Eurotiales</taxon>
        <taxon>Aspergillaceae</taxon>
        <taxon>Aspergillus</taxon>
        <taxon>Aspergillus subgen. Circumdati</taxon>
    </lineage>
</organism>
<protein>
    <recommendedName>
        <fullName evidence="3">Hydroxylase/desaturase asaB</fullName>
        <ecNumber evidence="2">1.-.-.-</ecNumber>
    </recommendedName>
    <alternativeName>
        <fullName evidence="3">Aspergillic acid biosynthesis cluster protein B</fullName>
    </alternativeName>
</protein>
<keyword id="KW-0560">Oxidoreductase</keyword>
<gene>
    <name evidence="3" type="primary">asaB</name>
    <name type="ORF">AFLA_023010</name>
</gene>
<feature type="chain" id="PRO_0000444457" description="Hydroxylase/desaturase asaB">
    <location>
        <begin position="1"/>
        <end position="227"/>
    </location>
</feature>
<name>ASAB_ASPFN</name>
<proteinExistence type="evidence at transcript level"/>
<dbReference type="EC" id="1.-.-.-" evidence="2"/>
<dbReference type="EMBL" id="EQ963473">
    <property type="protein sequence ID" value="EED55030.1"/>
    <property type="molecule type" value="Genomic_DNA"/>
</dbReference>
<dbReference type="RefSeq" id="XP_002373812.1">
    <property type="nucleotide sequence ID" value="XM_002373771.1"/>
</dbReference>
<dbReference type="SMR" id="B8N0E7"/>
<dbReference type="STRING" id="332952.B8N0E7"/>
<dbReference type="EnsemblFungi" id="EED55030">
    <property type="protein sequence ID" value="EED55030"/>
    <property type="gene ID" value="AFLA_023010"/>
</dbReference>
<dbReference type="VEuPathDB" id="FungiDB:AFLA_000137"/>
<dbReference type="eggNOG" id="ENOG502RZAA">
    <property type="taxonomic scope" value="Eukaryota"/>
</dbReference>
<dbReference type="HOGENOM" id="CLU_042688_2_0_1"/>
<dbReference type="OMA" id="DTHGFQW"/>
<dbReference type="GO" id="GO:0016491">
    <property type="term" value="F:oxidoreductase activity"/>
    <property type="evidence" value="ECO:0007669"/>
    <property type="project" value="UniProtKB-KW"/>
</dbReference>
<dbReference type="InterPro" id="IPR044053">
    <property type="entry name" value="AsaB-like"/>
</dbReference>
<dbReference type="NCBIfam" id="NF041278">
    <property type="entry name" value="CmcJ_NvfI_EfuI"/>
    <property type="match status" value="1"/>
</dbReference>
<dbReference type="PANTHER" id="PTHR34598">
    <property type="entry name" value="BLL6449 PROTEIN"/>
    <property type="match status" value="1"/>
</dbReference>
<dbReference type="PANTHER" id="PTHR34598:SF3">
    <property type="entry name" value="OXIDOREDUCTASE AN1597"/>
    <property type="match status" value="1"/>
</dbReference>